<organism>
    <name type="scientific">Burkholderia vietnamiensis (strain G4 / LMG 22486)</name>
    <name type="common">Burkholderia cepacia (strain R1808)</name>
    <dbReference type="NCBI Taxonomy" id="269482"/>
    <lineage>
        <taxon>Bacteria</taxon>
        <taxon>Pseudomonadati</taxon>
        <taxon>Pseudomonadota</taxon>
        <taxon>Betaproteobacteria</taxon>
        <taxon>Burkholderiales</taxon>
        <taxon>Burkholderiaceae</taxon>
        <taxon>Burkholderia</taxon>
        <taxon>Burkholderia cepacia complex</taxon>
    </lineage>
</organism>
<sequence length="343" mass="37314">MTTDTTGRTGKPAAAASPERFRYGFLKGNPQLTKNGELKHLLSIEGLPRSIVNHILDTAEQFVSVTDREVKKVPLLRGKSVFNLFFENSTRTRTTFEIAATRLSADVLNLNINASSTSKGESLLDTINNLSAMHADLFVVRHASSGAPYLIAEHCAPHVHVINAGDGRHAHPTQGLLDMYTIRHYKRDFTKLRVAIVGDILHSRVARSDIHALTTLGVPEVRAIGPRTLLPGGLEQMGVKVFHNLDEGLKGVDVIIMLRLQNERMSGALLPSAQEYFKTWGLTPERLALAAPDAIVMHPGPMNRGVEIDSQVADGPQSVILNQVTFGIAVRMAVMGIVAGNSD</sequence>
<proteinExistence type="inferred from homology"/>
<comment type="function">
    <text evidence="1">Catalyzes the condensation of carbamoyl phosphate and aspartate to form carbamoyl aspartate and inorganic phosphate, the committed step in the de novo pyrimidine nucleotide biosynthesis pathway.</text>
</comment>
<comment type="catalytic activity">
    <reaction evidence="1">
        <text>carbamoyl phosphate + L-aspartate = N-carbamoyl-L-aspartate + phosphate + H(+)</text>
        <dbReference type="Rhea" id="RHEA:20013"/>
        <dbReference type="ChEBI" id="CHEBI:15378"/>
        <dbReference type="ChEBI" id="CHEBI:29991"/>
        <dbReference type="ChEBI" id="CHEBI:32814"/>
        <dbReference type="ChEBI" id="CHEBI:43474"/>
        <dbReference type="ChEBI" id="CHEBI:58228"/>
        <dbReference type="EC" id="2.1.3.2"/>
    </reaction>
</comment>
<comment type="pathway">
    <text evidence="1">Pyrimidine metabolism; UMP biosynthesis via de novo pathway; (S)-dihydroorotate from bicarbonate: step 2/3.</text>
</comment>
<comment type="subunit">
    <text evidence="1">Heterododecamer (2C3:3R2) of six catalytic PyrB chains organized as two trimers (C3), and six regulatory PyrI chains organized as three dimers (R2).</text>
</comment>
<comment type="similarity">
    <text evidence="1">Belongs to the aspartate/ornithine carbamoyltransferase superfamily. ATCase family.</text>
</comment>
<reference key="1">
    <citation type="submission" date="2007-03" db="EMBL/GenBank/DDBJ databases">
        <title>Complete sequence of chromosome 1 of Burkholderia vietnamiensis G4.</title>
        <authorList>
            <consortium name="US DOE Joint Genome Institute"/>
            <person name="Copeland A."/>
            <person name="Lucas S."/>
            <person name="Lapidus A."/>
            <person name="Barry K."/>
            <person name="Detter J.C."/>
            <person name="Glavina del Rio T."/>
            <person name="Hammon N."/>
            <person name="Israni S."/>
            <person name="Dalin E."/>
            <person name="Tice H."/>
            <person name="Pitluck S."/>
            <person name="Chain P."/>
            <person name="Malfatti S."/>
            <person name="Shin M."/>
            <person name="Vergez L."/>
            <person name="Schmutz J."/>
            <person name="Larimer F."/>
            <person name="Land M."/>
            <person name="Hauser L."/>
            <person name="Kyrpides N."/>
            <person name="Tiedje J."/>
            <person name="Richardson P."/>
        </authorList>
    </citation>
    <scope>NUCLEOTIDE SEQUENCE [LARGE SCALE GENOMIC DNA]</scope>
    <source>
        <strain>G4 / LMG 22486</strain>
    </source>
</reference>
<gene>
    <name evidence="1" type="primary">pyrB</name>
    <name type="ordered locus">Bcep1808_0801</name>
</gene>
<keyword id="KW-0665">Pyrimidine biosynthesis</keyword>
<keyword id="KW-0808">Transferase</keyword>
<accession>A4JC10</accession>
<protein>
    <recommendedName>
        <fullName evidence="1">Aspartate carbamoyltransferase catalytic subunit</fullName>
        <ecNumber evidence="1">2.1.3.2</ecNumber>
    </recommendedName>
    <alternativeName>
        <fullName evidence="1">Aspartate transcarbamylase</fullName>
        <shortName evidence="1">ATCase</shortName>
    </alternativeName>
</protein>
<dbReference type="EC" id="2.1.3.2" evidence="1"/>
<dbReference type="EMBL" id="CP000614">
    <property type="protein sequence ID" value="ABO53813.1"/>
    <property type="molecule type" value="Genomic_DNA"/>
</dbReference>
<dbReference type="SMR" id="A4JC10"/>
<dbReference type="KEGG" id="bvi:Bcep1808_0801"/>
<dbReference type="eggNOG" id="COG0540">
    <property type="taxonomic scope" value="Bacteria"/>
</dbReference>
<dbReference type="HOGENOM" id="CLU_043846_2_0_4"/>
<dbReference type="UniPathway" id="UPA00070">
    <property type="reaction ID" value="UER00116"/>
</dbReference>
<dbReference type="Proteomes" id="UP000002287">
    <property type="component" value="Chromosome 1"/>
</dbReference>
<dbReference type="GO" id="GO:0005829">
    <property type="term" value="C:cytosol"/>
    <property type="evidence" value="ECO:0007669"/>
    <property type="project" value="TreeGrafter"/>
</dbReference>
<dbReference type="GO" id="GO:0016597">
    <property type="term" value="F:amino acid binding"/>
    <property type="evidence" value="ECO:0007669"/>
    <property type="project" value="InterPro"/>
</dbReference>
<dbReference type="GO" id="GO:0004070">
    <property type="term" value="F:aspartate carbamoyltransferase activity"/>
    <property type="evidence" value="ECO:0007669"/>
    <property type="project" value="UniProtKB-UniRule"/>
</dbReference>
<dbReference type="GO" id="GO:0006207">
    <property type="term" value="P:'de novo' pyrimidine nucleobase biosynthetic process"/>
    <property type="evidence" value="ECO:0007669"/>
    <property type="project" value="InterPro"/>
</dbReference>
<dbReference type="GO" id="GO:0044205">
    <property type="term" value="P:'de novo' UMP biosynthetic process"/>
    <property type="evidence" value="ECO:0007669"/>
    <property type="project" value="UniProtKB-UniRule"/>
</dbReference>
<dbReference type="GO" id="GO:0006520">
    <property type="term" value="P:amino acid metabolic process"/>
    <property type="evidence" value="ECO:0007669"/>
    <property type="project" value="InterPro"/>
</dbReference>
<dbReference type="FunFam" id="3.40.50.1370:FF:000007">
    <property type="entry name" value="Aspartate carbamoyltransferase"/>
    <property type="match status" value="1"/>
</dbReference>
<dbReference type="Gene3D" id="3.40.50.1370">
    <property type="entry name" value="Aspartate/ornithine carbamoyltransferase"/>
    <property type="match status" value="2"/>
</dbReference>
<dbReference type="HAMAP" id="MF_00001">
    <property type="entry name" value="Asp_carb_tr"/>
    <property type="match status" value="1"/>
</dbReference>
<dbReference type="InterPro" id="IPR006132">
    <property type="entry name" value="Asp/Orn_carbamoyltranf_P-bd"/>
</dbReference>
<dbReference type="InterPro" id="IPR006130">
    <property type="entry name" value="Asp/Orn_carbamoylTrfase"/>
</dbReference>
<dbReference type="InterPro" id="IPR036901">
    <property type="entry name" value="Asp/Orn_carbamoylTrfase_sf"/>
</dbReference>
<dbReference type="InterPro" id="IPR002082">
    <property type="entry name" value="Asp_carbamoyltransf"/>
</dbReference>
<dbReference type="InterPro" id="IPR006131">
    <property type="entry name" value="Asp_carbamoyltransf_Asp/Orn-bd"/>
</dbReference>
<dbReference type="NCBIfam" id="TIGR00670">
    <property type="entry name" value="asp_carb_tr"/>
    <property type="match status" value="1"/>
</dbReference>
<dbReference type="NCBIfam" id="NF002032">
    <property type="entry name" value="PRK00856.1"/>
    <property type="match status" value="1"/>
</dbReference>
<dbReference type="PANTHER" id="PTHR45753:SF6">
    <property type="entry name" value="ASPARTATE CARBAMOYLTRANSFERASE"/>
    <property type="match status" value="1"/>
</dbReference>
<dbReference type="PANTHER" id="PTHR45753">
    <property type="entry name" value="ORNITHINE CARBAMOYLTRANSFERASE, MITOCHONDRIAL"/>
    <property type="match status" value="1"/>
</dbReference>
<dbReference type="Pfam" id="PF00185">
    <property type="entry name" value="OTCace"/>
    <property type="match status" value="1"/>
</dbReference>
<dbReference type="Pfam" id="PF02729">
    <property type="entry name" value="OTCace_N"/>
    <property type="match status" value="1"/>
</dbReference>
<dbReference type="PRINTS" id="PR00100">
    <property type="entry name" value="AOTCASE"/>
</dbReference>
<dbReference type="PRINTS" id="PR00101">
    <property type="entry name" value="ATCASE"/>
</dbReference>
<dbReference type="SUPFAM" id="SSF53671">
    <property type="entry name" value="Aspartate/ornithine carbamoyltransferase"/>
    <property type="match status" value="1"/>
</dbReference>
<dbReference type="PROSITE" id="PS00097">
    <property type="entry name" value="CARBAMOYLTRANSFERASE"/>
    <property type="match status" value="1"/>
</dbReference>
<evidence type="ECO:0000255" key="1">
    <source>
        <dbReference type="HAMAP-Rule" id="MF_00001"/>
    </source>
</evidence>
<name>PYRB_BURVG</name>
<feature type="chain" id="PRO_0000321081" description="Aspartate carbamoyltransferase catalytic subunit">
    <location>
        <begin position="1"/>
        <end position="343"/>
    </location>
</feature>
<feature type="binding site" evidence="1">
    <location>
        <position position="91"/>
    </location>
    <ligand>
        <name>carbamoyl phosphate</name>
        <dbReference type="ChEBI" id="CHEBI:58228"/>
    </ligand>
</feature>
<feature type="binding site" evidence="1">
    <location>
        <position position="92"/>
    </location>
    <ligand>
        <name>carbamoyl phosphate</name>
        <dbReference type="ChEBI" id="CHEBI:58228"/>
    </ligand>
</feature>
<feature type="binding site" evidence="1">
    <location>
        <position position="119"/>
    </location>
    <ligand>
        <name>L-aspartate</name>
        <dbReference type="ChEBI" id="CHEBI:29991"/>
    </ligand>
</feature>
<feature type="binding site" evidence="1">
    <location>
        <position position="141"/>
    </location>
    <ligand>
        <name>carbamoyl phosphate</name>
        <dbReference type="ChEBI" id="CHEBI:58228"/>
    </ligand>
</feature>
<feature type="binding site" evidence="1">
    <location>
        <position position="171"/>
    </location>
    <ligand>
        <name>carbamoyl phosphate</name>
        <dbReference type="ChEBI" id="CHEBI:58228"/>
    </ligand>
</feature>
<feature type="binding site" evidence="1">
    <location>
        <position position="174"/>
    </location>
    <ligand>
        <name>carbamoyl phosphate</name>
        <dbReference type="ChEBI" id="CHEBI:58228"/>
    </ligand>
</feature>
<feature type="binding site" evidence="1">
    <location>
        <position position="204"/>
    </location>
    <ligand>
        <name>L-aspartate</name>
        <dbReference type="ChEBI" id="CHEBI:29991"/>
    </ligand>
</feature>
<feature type="binding site" evidence="1">
    <location>
        <position position="259"/>
    </location>
    <ligand>
        <name>L-aspartate</name>
        <dbReference type="ChEBI" id="CHEBI:29991"/>
    </ligand>
</feature>
<feature type="binding site" evidence="1">
    <location>
        <position position="300"/>
    </location>
    <ligand>
        <name>carbamoyl phosphate</name>
        <dbReference type="ChEBI" id="CHEBI:58228"/>
    </ligand>
</feature>
<feature type="binding site" evidence="1">
    <location>
        <position position="301"/>
    </location>
    <ligand>
        <name>carbamoyl phosphate</name>
        <dbReference type="ChEBI" id="CHEBI:58228"/>
    </ligand>
</feature>